<keyword id="KW-0067">ATP-binding</keyword>
<keyword id="KW-0997">Cell inner membrane</keyword>
<keyword id="KW-1003">Cell membrane</keyword>
<keyword id="KW-0418">Kinase</keyword>
<keyword id="KW-0472">Membrane</keyword>
<keyword id="KW-0547">Nucleotide-binding</keyword>
<keyword id="KW-0597">Phosphoprotein</keyword>
<keyword id="KW-1185">Reference proteome</keyword>
<keyword id="KW-0808">Transferase</keyword>
<keyword id="KW-0812">Transmembrane</keyword>
<keyword id="KW-1133">Transmembrane helix</keyword>
<keyword id="KW-0902">Two-component regulatory system</keyword>
<proteinExistence type="evidence at protein level"/>
<sequence length="474" mass="52176">MRIGMRLLLGYFLLVAVAAWFVLAIFVKEVKPGVRRATEGTLIDTATLLAELARPDLLSGDPTHGQLAQAFNQLQHRPFRANIGGINKVRNEYHVYMTDAQGKVLFDSANKAVGQDYSRWNDVWLTLRGQYGARSTLQNPADPESSVMYVAAPIMDGSRLIGVLSVGKPNAAMAPVIKRSERRILWASAILLGIALVIGAGMVWWINRSIARLTRYADSVTDNKPVPLPDLGSSELRKLAQALESMRVKLEGKNYIEQYVYALTHELKSPLAAIRGAAEILREGPPPEVVARFTDNILTQNARMQALVETLLRQARLENRQEVVLTAVDVAALFRRVSEARTVQLAEKKITLHVTPTEVNVAAEPALLEQALGNLLDNAIDFTPESGCITLSAEVDQEHVTLKVLDTGSGIPDYALSRIFERFYSLPRANGQKSSGLGLAFVSEVARLFNGEVTLRNVQEGGVLASLRLHRHFT</sequence>
<accession>P08401</accession>
<accession>Q2M5R8</accession>
<reference key="1">
    <citation type="journal article" date="1986" name="J. Bacteriol.">
        <title>Nucleotide sequence of the phoM region of Escherichia coli: four open reading frames may constitute an operon.</title>
        <authorList>
            <person name="Amemura M."/>
            <person name="Makino K."/>
            <person name="Shinagawa H."/>
            <person name="Nakata A."/>
        </authorList>
    </citation>
    <scope>NUCLEOTIDE SEQUENCE [GENOMIC DNA]</scope>
</reference>
<reference key="2">
    <citation type="journal article" date="1995" name="Nucleic Acids Res.">
        <title>Analysis of the Escherichia coli genome VI: DNA sequence of the region from 92.8 through 100 minutes.</title>
        <authorList>
            <person name="Burland V.D."/>
            <person name="Plunkett G. III"/>
            <person name="Sofia H.J."/>
            <person name="Daniels D.L."/>
            <person name="Blattner F.R."/>
        </authorList>
    </citation>
    <scope>NUCLEOTIDE SEQUENCE [LARGE SCALE GENOMIC DNA]</scope>
    <source>
        <strain>K12 / MG1655 / ATCC 47076</strain>
    </source>
</reference>
<reference key="3">
    <citation type="journal article" date="1997" name="Science">
        <title>The complete genome sequence of Escherichia coli K-12.</title>
        <authorList>
            <person name="Blattner F.R."/>
            <person name="Plunkett G. III"/>
            <person name="Bloch C.A."/>
            <person name="Perna N.T."/>
            <person name="Burland V."/>
            <person name="Riley M."/>
            <person name="Collado-Vides J."/>
            <person name="Glasner J.D."/>
            <person name="Rode C.K."/>
            <person name="Mayhew G.F."/>
            <person name="Gregor J."/>
            <person name="Davis N.W."/>
            <person name="Kirkpatrick H.A."/>
            <person name="Goeden M.A."/>
            <person name="Rose D.J."/>
            <person name="Mau B."/>
            <person name="Shao Y."/>
        </authorList>
    </citation>
    <scope>NUCLEOTIDE SEQUENCE [LARGE SCALE GENOMIC DNA]</scope>
    <source>
        <strain>K12 / MG1655 / ATCC 47076</strain>
    </source>
</reference>
<reference key="4">
    <citation type="journal article" date="2006" name="Mol. Syst. Biol.">
        <title>Highly accurate genome sequences of Escherichia coli K-12 strains MG1655 and W3110.</title>
        <authorList>
            <person name="Hayashi K."/>
            <person name="Morooka N."/>
            <person name="Yamamoto Y."/>
            <person name="Fujita K."/>
            <person name="Isono K."/>
            <person name="Choi S."/>
            <person name="Ohtsubo E."/>
            <person name="Baba T."/>
            <person name="Wanner B.L."/>
            <person name="Mori H."/>
            <person name="Horiuchi T."/>
        </authorList>
    </citation>
    <scope>NUCLEOTIDE SEQUENCE [LARGE SCALE GENOMIC DNA]</scope>
    <source>
        <strain>K12 / W3110 / ATCC 27325 / DSM 5911</strain>
    </source>
</reference>
<reference key="5">
    <citation type="journal article" date="1988" name="Mol. Microbiol.">
        <title>Identification and sequencing of the Escherichia coli cet gene which codes for an inner membrane protein, mutation of which causes tolerance to colicin E2.</title>
        <authorList>
            <person name="Drury L.S."/>
            <person name="Buxton R.S."/>
        </authorList>
    </citation>
    <scope>NUCLEOTIDE SEQUENCE [GENOMIC DNA] OF 381-474</scope>
    <source>
        <strain>K12</strain>
    </source>
</reference>
<reference key="6">
    <citation type="journal article" date="1990" name="J. Bacteriol.">
        <title>Cross talk to the phosphate regulon of Escherichia coli by PhoM protein: PhoM is a histidine protein kinase and catalyzes phosphorylation of PhoB and PhoM-open reading frame 2.</title>
        <authorList>
            <person name="Amemura M."/>
            <person name="Makino K."/>
            <person name="Shinagawa H."/>
            <person name="Nakata A."/>
        </authorList>
    </citation>
    <scope>FUNCTION</scope>
</reference>
<reference key="7">
    <citation type="journal article" date="2005" name="J. Biol. Chem.">
        <title>Functional characterization in vitro of all two-component signal transduction systems from Escherichia coli.</title>
        <authorList>
            <person name="Yamamoto K."/>
            <person name="Hirao K."/>
            <person name="Oshima T."/>
            <person name="Aiba H."/>
            <person name="Utsumi R."/>
            <person name="Ishihama A."/>
        </authorList>
    </citation>
    <scope>FUNCTION</scope>
    <scope>AUTOPHOSPHORYLATION</scope>
    <source>
        <strain>K12 / W3110 / ATCC 27325 / DSM 5911</strain>
    </source>
</reference>
<reference key="8">
    <citation type="journal article" date="2005" name="Science">
        <title>Global topology analysis of the Escherichia coli inner membrane proteome.</title>
        <authorList>
            <person name="Daley D.O."/>
            <person name="Rapp M."/>
            <person name="Granseth E."/>
            <person name="Melen K."/>
            <person name="Drew D."/>
            <person name="von Heijne G."/>
        </authorList>
    </citation>
    <scope>TOPOLOGY [LARGE SCALE ANALYSIS]</scope>
    <source>
        <strain>K12 / MG1655 / ATCC 47076</strain>
    </source>
</reference>
<name>CREC_ECOLI</name>
<comment type="function">
    <text evidence="4 5">Member of the two-component regulatory system CreC/CreB involved in catabolic regulation. CreC may function as a membrane-associated protein kinase that phosphorylates CreB in response to environmental signals. CreC can also phosphorylate PhoB.</text>
</comment>
<comment type="catalytic activity">
    <reaction>
        <text>ATP + protein L-histidine = ADP + protein N-phospho-L-histidine.</text>
        <dbReference type="EC" id="2.7.13.3"/>
    </reaction>
</comment>
<comment type="subcellular location">
    <subcellularLocation>
        <location>Cell inner membrane</location>
        <topology>Multi-pass membrane protein</topology>
    </subcellularLocation>
</comment>
<comment type="PTM">
    <text>Autophosphorylated.</text>
</comment>
<dbReference type="EC" id="2.7.13.3"/>
<dbReference type="EMBL" id="M13608">
    <property type="protein sequence ID" value="AAA24375.1"/>
    <property type="molecule type" value="Genomic_DNA"/>
</dbReference>
<dbReference type="EMBL" id="U14003">
    <property type="protein sequence ID" value="AAA97295.1"/>
    <property type="molecule type" value="Genomic_DNA"/>
</dbReference>
<dbReference type="EMBL" id="U00096">
    <property type="protein sequence ID" value="AAC77352.1"/>
    <property type="molecule type" value="Genomic_DNA"/>
</dbReference>
<dbReference type="EMBL" id="AP009048">
    <property type="protein sequence ID" value="BAE78388.1"/>
    <property type="molecule type" value="Genomic_DNA"/>
</dbReference>
<dbReference type="EMBL" id="Y00538">
    <property type="protein sequence ID" value="CAA68601.1"/>
    <property type="molecule type" value="Genomic_DNA"/>
</dbReference>
<dbReference type="PIR" id="S56623">
    <property type="entry name" value="RGECFM"/>
</dbReference>
<dbReference type="RefSeq" id="NP_418816.1">
    <property type="nucleotide sequence ID" value="NC_000913.3"/>
</dbReference>
<dbReference type="RefSeq" id="WP_001219559.1">
    <property type="nucleotide sequence ID" value="NZ_LN832404.1"/>
</dbReference>
<dbReference type="RefSeq" id="WP_001219577.1">
    <property type="nucleotide sequence ID" value="NZ_CP064683.1"/>
</dbReference>
<dbReference type="SMR" id="P08401"/>
<dbReference type="BioGRID" id="4261905">
    <property type="interactions" value="11"/>
</dbReference>
<dbReference type="BioGRID" id="852902">
    <property type="interactions" value="1"/>
</dbReference>
<dbReference type="DIP" id="DIP-9319N"/>
<dbReference type="FunCoup" id="P08401">
    <property type="interactions" value="252"/>
</dbReference>
<dbReference type="IntAct" id="P08401">
    <property type="interactions" value="5"/>
</dbReference>
<dbReference type="STRING" id="511145.b4399"/>
<dbReference type="PaxDb" id="511145-b4399"/>
<dbReference type="EnsemblBacteria" id="AAC77352">
    <property type="protein sequence ID" value="AAC77352"/>
    <property type="gene ID" value="b4399"/>
</dbReference>
<dbReference type="GeneID" id="948609"/>
<dbReference type="KEGG" id="ecj:JW4362"/>
<dbReference type="KEGG" id="eco:b4399"/>
<dbReference type="PATRIC" id="fig|511145.12.peg.4548"/>
<dbReference type="EchoBASE" id="EB0723"/>
<dbReference type="eggNOG" id="COG2205">
    <property type="taxonomic scope" value="Bacteria"/>
</dbReference>
<dbReference type="HOGENOM" id="CLU_000445_89_31_6"/>
<dbReference type="InParanoid" id="P08401"/>
<dbReference type="OMA" id="VERYVHT"/>
<dbReference type="OrthoDB" id="9806130at2"/>
<dbReference type="PhylomeDB" id="P08401"/>
<dbReference type="BioCyc" id="EcoCyc:CREC-MONOMER"/>
<dbReference type="BioCyc" id="MetaCyc:CREC-MONOMER"/>
<dbReference type="BRENDA" id="2.7.13.3">
    <property type="organism ID" value="2026"/>
</dbReference>
<dbReference type="PRO" id="PR:P08401"/>
<dbReference type="Proteomes" id="UP000000625">
    <property type="component" value="Chromosome"/>
</dbReference>
<dbReference type="GO" id="GO:0005886">
    <property type="term" value="C:plasma membrane"/>
    <property type="evidence" value="ECO:0000314"/>
    <property type="project" value="EcoCyc"/>
</dbReference>
<dbReference type="GO" id="GO:0005524">
    <property type="term" value="F:ATP binding"/>
    <property type="evidence" value="ECO:0007669"/>
    <property type="project" value="UniProtKB-KW"/>
</dbReference>
<dbReference type="GO" id="GO:0000155">
    <property type="term" value="F:phosphorelay sensor kinase activity"/>
    <property type="evidence" value="ECO:0000314"/>
    <property type="project" value="EcoCyc"/>
</dbReference>
<dbReference type="GO" id="GO:0019660">
    <property type="term" value="P:glycolytic fermentation"/>
    <property type="evidence" value="ECO:0000270"/>
    <property type="project" value="EcoCyc"/>
</dbReference>
<dbReference type="CDD" id="cd16945">
    <property type="entry name" value="HATPase_CreC-like"/>
    <property type="match status" value="1"/>
</dbReference>
<dbReference type="CDD" id="cd00082">
    <property type="entry name" value="HisKA"/>
    <property type="match status" value="1"/>
</dbReference>
<dbReference type="FunFam" id="1.10.287.130:FF:000051">
    <property type="entry name" value="Two-component system sensor histidine kinase CreC"/>
    <property type="match status" value="1"/>
</dbReference>
<dbReference type="FunFam" id="3.30.450.20:FF:000070">
    <property type="entry name" value="Two-component system sensor histidine kinase CreC"/>
    <property type="match status" value="1"/>
</dbReference>
<dbReference type="FunFam" id="3.30.565.10:FF:000067">
    <property type="entry name" value="Two-component system sensor histidine kinase CreC"/>
    <property type="match status" value="1"/>
</dbReference>
<dbReference type="Gene3D" id="1.10.287.130">
    <property type="match status" value="1"/>
</dbReference>
<dbReference type="Gene3D" id="6.10.340.10">
    <property type="match status" value="1"/>
</dbReference>
<dbReference type="Gene3D" id="3.30.565.10">
    <property type="entry name" value="Histidine kinase-like ATPase, C-terminal domain"/>
    <property type="match status" value="1"/>
</dbReference>
<dbReference type="Gene3D" id="3.30.450.20">
    <property type="entry name" value="PAS domain"/>
    <property type="match status" value="1"/>
</dbReference>
<dbReference type="InterPro" id="IPR003660">
    <property type="entry name" value="HAMP_dom"/>
</dbReference>
<dbReference type="InterPro" id="IPR036890">
    <property type="entry name" value="HATPase_C_sf"/>
</dbReference>
<dbReference type="InterPro" id="IPR005467">
    <property type="entry name" value="His_kinase_dom"/>
</dbReference>
<dbReference type="InterPro" id="IPR003661">
    <property type="entry name" value="HisK_dim/P_dom"/>
</dbReference>
<dbReference type="InterPro" id="IPR036097">
    <property type="entry name" value="HisK_dim/P_sf"/>
</dbReference>
<dbReference type="InterPro" id="IPR029151">
    <property type="entry name" value="Sensor-like_sf"/>
</dbReference>
<dbReference type="InterPro" id="IPR004358">
    <property type="entry name" value="Sig_transdc_His_kin-like_C"/>
</dbReference>
<dbReference type="InterPro" id="IPR050428">
    <property type="entry name" value="TCS_sensor_his_kinase"/>
</dbReference>
<dbReference type="NCBIfam" id="NF008312">
    <property type="entry name" value="PRK11100.1"/>
    <property type="match status" value="1"/>
</dbReference>
<dbReference type="PANTHER" id="PTHR45436:SF10">
    <property type="entry name" value="HISTIDINE KINASE"/>
    <property type="match status" value="1"/>
</dbReference>
<dbReference type="PANTHER" id="PTHR45436">
    <property type="entry name" value="SENSOR HISTIDINE KINASE YKOH"/>
    <property type="match status" value="1"/>
</dbReference>
<dbReference type="Pfam" id="PF00672">
    <property type="entry name" value="HAMP"/>
    <property type="match status" value="1"/>
</dbReference>
<dbReference type="Pfam" id="PF02518">
    <property type="entry name" value="HATPase_c"/>
    <property type="match status" value="1"/>
</dbReference>
<dbReference type="Pfam" id="PF00512">
    <property type="entry name" value="HisKA"/>
    <property type="match status" value="1"/>
</dbReference>
<dbReference type="PRINTS" id="PR00344">
    <property type="entry name" value="BCTRLSENSOR"/>
</dbReference>
<dbReference type="SMART" id="SM00304">
    <property type="entry name" value="HAMP"/>
    <property type="match status" value="1"/>
</dbReference>
<dbReference type="SMART" id="SM00387">
    <property type="entry name" value="HATPase_c"/>
    <property type="match status" value="1"/>
</dbReference>
<dbReference type="SMART" id="SM00388">
    <property type="entry name" value="HisKA"/>
    <property type="match status" value="1"/>
</dbReference>
<dbReference type="SUPFAM" id="SSF55874">
    <property type="entry name" value="ATPase domain of HSP90 chaperone/DNA topoisomerase II/histidine kinase"/>
    <property type="match status" value="1"/>
</dbReference>
<dbReference type="SUPFAM" id="SSF47384">
    <property type="entry name" value="Homodimeric domain of signal transducing histidine kinase"/>
    <property type="match status" value="1"/>
</dbReference>
<dbReference type="SUPFAM" id="SSF103190">
    <property type="entry name" value="Sensory domain-like"/>
    <property type="match status" value="1"/>
</dbReference>
<dbReference type="PROSITE" id="PS50885">
    <property type="entry name" value="HAMP"/>
    <property type="match status" value="1"/>
</dbReference>
<dbReference type="PROSITE" id="PS50109">
    <property type="entry name" value="HIS_KIN"/>
    <property type="match status" value="1"/>
</dbReference>
<evidence type="ECO:0000255" key="1"/>
<evidence type="ECO:0000255" key="2">
    <source>
        <dbReference type="PROSITE-ProRule" id="PRU00102"/>
    </source>
</evidence>
<evidence type="ECO:0000255" key="3">
    <source>
        <dbReference type="PROSITE-ProRule" id="PRU00107"/>
    </source>
</evidence>
<evidence type="ECO:0000269" key="4">
    <source>
    </source>
</evidence>
<evidence type="ECO:0000269" key="5">
    <source>
    </source>
</evidence>
<evidence type="ECO:0000305" key="6"/>
<gene>
    <name type="primary">creC</name>
    <name type="synonym">phoM</name>
    <name type="ordered locus">b4399</name>
    <name type="ordered locus">JW4362</name>
</gene>
<protein>
    <recommendedName>
        <fullName>Sensor protein CreC</fullName>
        <ecNumber>2.7.13.3</ecNumber>
    </recommendedName>
</protein>
<feature type="chain" id="PRO_0000074742" description="Sensor protein CreC">
    <location>
        <begin position="1"/>
        <end position="474"/>
    </location>
</feature>
<feature type="topological domain" description="Periplasmic" evidence="1">
    <location>
        <begin position="1"/>
        <end position="6"/>
    </location>
</feature>
<feature type="transmembrane region" description="Helical" evidence="1">
    <location>
        <begin position="7"/>
        <end position="27"/>
    </location>
</feature>
<feature type="topological domain" description="Cytoplasmic" evidence="1">
    <location>
        <begin position="28"/>
        <end position="146"/>
    </location>
</feature>
<feature type="transmembrane region" description="Helical" evidence="1">
    <location>
        <begin position="147"/>
        <end position="167"/>
    </location>
</feature>
<feature type="topological domain" description="Periplasmic" evidence="1">
    <location>
        <begin position="168"/>
        <end position="183"/>
    </location>
</feature>
<feature type="transmembrane region" description="Helical" evidence="1">
    <location>
        <begin position="184"/>
        <end position="204"/>
    </location>
</feature>
<feature type="topological domain" description="Cytoplasmic" evidence="1">
    <location>
        <begin position="205"/>
        <end position="474"/>
    </location>
</feature>
<feature type="domain" description="HAMP" evidence="2">
    <location>
        <begin position="205"/>
        <end position="255"/>
    </location>
</feature>
<feature type="domain" description="Histidine kinase" evidence="3">
    <location>
        <begin position="262"/>
        <end position="473"/>
    </location>
</feature>
<feature type="modified residue" description="Phosphohistidine; by autocatalysis" evidence="3">
    <location>
        <position position="265"/>
    </location>
</feature>
<feature type="sequence conflict" description="In Ref. 1; AAA24375." evidence="6" ref="1">
    <original>R</original>
    <variation>P</variation>
    <location>
        <position position="77"/>
    </location>
</feature>
<organism>
    <name type="scientific">Escherichia coli (strain K12)</name>
    <dbReference type="NCBI Taxonomy" id="83333"/>
    <lineage>
        <taxon>Bacteria</taxon>
        <taxon>Pseudomonadati</taxon>
        <taxon>Pseudomonadota</taxon>
        <taxon>Gammaproteobacteria</taxon>
        <taxon>Enterobacterales</taxon>
        <taxon>Enterobacteriaceae</taxon>
        <taxon>Escherichia</taxon>
    </lineage>
</organism>